<keyword id="KW-0256">Endoplasmic reticulum</keyword>
<keyword id="KW-0472">Membrane</keyword>
<keyword id="KW-0479">Metal-binding</keyword>
<keyword id="KW-1185">Reference proteome</keyword>
<keyword id="KW-0677">Repeat</keyword>
<keyword id="KW-0808">Transferase</keyword>
<keyword id="KW-0812">Transmembrane</keyword>
<keyword id="KW-1133">Transmembrane helix</keyword>
<keyword id="KW-0833">Ubl conjugation pathway</keyword>
<keyword id="KW-0862">Zinc</keyword>
<keyword id="KW-0863">Zinc-finger</keyword>
<proteinExistence type="evidence at transcript level"/>
<evidence type="ECO:0000250" key="1">
    <source>
        <dbReference type="UniProtKB" id="O60260"/>
    </source>
</evidence>
<evidence type="ECO:0000250" key="2">
    <source>
        <dbReference type="UniProtKB" id="Q6ZMZ0"/>
    </source>
</evidence>
<evidence type="ECO:0000255" key="3"/>
<evidence type="ECO:0000255" key="4">
    <source>
        <dbReference type="PROSITE-ProRule" id="PRU01221"/>
    </source>
</evidence>
<evidence type="ECO:0000256" key="5">
    <source>
        <dbReference type="SAM" id="MobiDB-lite"/>
    </source>
</evidence>
<evidence type="ECO:0000305" key="6"/>
<feature type="chain" id="PRO_0000307190" description="E3 ubiquitin-protein ligase RNF19B">
    <location>
        <begin position="1"/>
        <end position="687"/>
    </location>
</feature>
<feature type="transmembrane region" description="Helical" evidence="3">
    <location>
        <begin position="330"/>
        <end position="350"/>
    </location>
</feature>
<feature type="transmembrane region" description="Helical" evidence="3">
    <location>
        <begin position="391"/>
        <end position="411"/>
    </location>
</feature>
<feature type="zinc finger region" description="RING-type 1" evidence="4">
    <location>
        <begin position="95"/>
        <end position="144"/>
    </location>
</feature>
<feature type="zinc finger region" description="IBR-type" evidence="4">
    <location>
        <begin position="161"/>
        <end position="227"/>
    </location>
</feature>
<feature type="zinc finger region" description="RING-type 2; atypical" evidence="4">
    <location>
        <begin position="263"/>
        <end position="294"/>
    </location>
</feature>
<feature type="region of interest" description="Required for ubiquitin ligase activity and for protection against staurosporin-induced cell death" evidence="2">
    <location>
        <begin position="1"/>
        <end position="294"/>
    </location>
</feature>
<feature type="region of interest" description="Disordered" evidence="5">
    <location>
        <begin position="53"/>
        <end position="88"/>
    </location>
</feature>
<feature type="region of interest" description="TRIAD supradomain" evidence="4">
    <location>
        <begin position="91"/>
        <end position="313"/>
    </location>
</feature>
<feature type="region of interest" description="Disordered" evidence="5">
    <location>
        <begin position="618"/>
        <end position="662"/>
    </location>
</feature>
<feature type="compositionally biased region" description="Pro residues" evidence="5">
    <location>
        <begin position="60"/>
        <end position="85"/>
    </location>
</feature>
<feature type="compositionally biased region" description="Acidic residues" evidence="5">
    <location>
        <begin position="629"/>
        <end position="641"/>
    </location>
</feature>
<feature type="active site" evidence="4">
    <location>
        <position position="278"/>
    </location>
</feature>
<feature type="binding site" evidence="4">
    <location>
        <position position="95"/>
    </location>
    <ligand>
        <name>Zn(2+)</name>
        <dbReference type="ChEBI" id="CHEBI:29105"/>
        <label>1</label>
    </ligand>
</feature>
<feature type="binding site" evidence="4">
    <location>
        <position position="98"/>
    </location>
    <ligand>
        <name>Zn(2+)</name>
        <dbReference type="ChEBI" id="CHEBI:29105"/>
        <label>1</label>
    </ligand>
</feature>
<feature type="binding site" evidence="4">
    <location>
        <position position="118"/>
    </location>
    <ligand>
        <name>Zn(2+)</name>
        <dbReference type="ChEBI" id="CHEBI:29105"/>
        <label>1</label>
    </ligand>
</feature>
<feature type="binding site" evidence="4">
    <location>
        <position position="121"/>
    </location>
    <ligand>
        <name>Zn(2+)</name>
        <dbReference type="ChEBI" id="CHEBI:29105"/>
        <label>1</label>
    </ligand>
</feature>
<feature type="binding site" evidence="4">
    <location>
        <position position="182"/>
    </location>
    <ligand>
        <name>Zn(2+)</name>
        <dbReference type="ChEBI" id="CHEBI:29105"/>
        <label>2</label>
    </ligand>
</feature>
<feature type="binding site" evidence="4">
    <location>
        <position position="187"/>
    </location>
    <ligand>
        <name>Zn(2+)</name>
        <dbReference type="ChEBI" id="CHEBI:29105"/>
        <label>2</label>
    </ligand>
</feature>
<feature type="binding site" evidence="4">
    <location>
        <position position="204"/>
    </location>
    <ligand>
        <name>Zn(2+)</name>
        <dbReference type="ChEBI" id="CHEBI:29105"/>
        <label>2</label>
    </ligand>
</feature>
<feature type="binding site" evidence="4">
    <location>
        <position position="209"/>
    </location>
    <ligand>
        <name>Zn(2+)</name>
        <dbReference type="ChEBI" id="CHEBI:29105"/>
        <label>2</label>
    </ligand>
</feature>
<feature type="binding site" evidence="4">
    <location>
        <position position="214"/>
    </location>
    <ligand>
        <name>Zn(2+)</name>
        <dbReference type="ChEBI" id="CHEBI:29105"/>
        <label>3</label>
    </ligand>
</feature>
<feature type="binding site" evidence="4">
    <location>
        <position position="217"/>
    </location>
    <ligand>
        <name>Zn(2+)</name>
        <dbReference type="ChEBI" id="CHEBI:29105"/>
        <label>3</label>
    </ligand>
</feature>
<feature type="binding site" evidence="4">
    <location>
        <position position="222"/>
    </location>
    <ligand>
        <name>Zn(2+)</name>
        <dbReference type="ChEBI" id="CHEBI:29105"/>
        <label>3</label>
    </ligand>
</feature>
<feature type="binding site" evidence="4">
    <location>
        <position position="227"/>
    </location>
    <ligand>
        <name>Zn(2+)</name>
        <dbReference type="ChEBI" id="CHEBI:29105"/>
        <label>3</label>
    </ligand>
</feature>
<feature type="binding site" evidence="4">
    <location>
        <position position="263"/>
    </location>
    <ligand>
        <name>Zn(2+)</name>
        <dbReference type="ChEBI" id="CHEBI:29105"/>
        <label>4</label>
    </ligand>
</feature>
<feature type="binding site" evidence="4">
    <location>
        <position position="266"/>
    </location>
    <ligand>
        <name>Zn(2+)</name>
        <dbReference type="ChEBI" id="CHEBI:29105"/>
        <label>4</label>
    </ligand>
</feature>
<feature type="binding site" evidence="4">
    <location>
        <position position="283"/>
    </location>
    <ligand>
        <name>Zn(2+)</name>
        <dbReference type="ChEBI" id="CHEBI:29105"/>
        <label>4</label>
    </ligand>
</feature>
<feature type="binding site" evidence="4">
    <location>
        <position position="286"/>
    </location>
    <ligand>
        <name>Zn(2+)</name>
        <dbReference type="ChEBI" id="CHEBI:29105"/>
        <label>4</label>
    </ligand>
</feature>
<feature type="binding site" evidence="4">
    <location>
        <position position="291"/>
    </location>
    <ligand>
        <name>Zn(2+)</name>
        <dbReference type="ChEBI" id="CHEBI:29105"/>
        <label>5</label>
    </ligand>
</feature>
<feature type="binding site" evidence="4">
    <location>
        <position position="294"/>
    </location>
    <ligand>
        <name>Zn(2+)</name>
        <dbReference type="ChEBI" id="CHEBI:29105"/>
        <label>5</label>
    </ligand>
</feature>
<feature type="binding site" evidence="4">
    <location>
        <position position="302"/>
    </location>
    <ligand>
        <name>Zn(2+)</name>
        <dbReference type="ChEBI" id="CHEBI:29105"/>
        <label>5</label>
    </ligand>
</feature>
<feature type="binding site" evidence="4">
    <location>
        <position position="309"/>
    </location>
    <ligand>
        <name>Zn(2+)</name>
        <dbReference type="ChEBI" id="CHEBI:29105"/>
        <label>5</label>
    </ligand>
</feature>
<feature type="sequence conflict" description="In Ref. 1; AAI30178." evidence="6" ref="1">
    <original>Y</original>
    <variation>S</variation>
    <location>
        <position position="22"/>
    </location>
</feature>
<feature type="sequence conflict" description="In Ref. 1; AAI30178." evidence="6" ref="1">
    <location>
        <position position="69"/>
    </location>
</feature>
<name>RN19B_XENLA</name>
<accession>Q08B84</accession>
<accession>A1L3L5</accession>
<accession>Q32NH7</accession>
<dbReference type="EC" id="2.3.2.31" evidence="1"/>
<dbReference type="EMBL" id="BC108619">
    <property type="protein sequence ID" value="AAI08620.1"/>
    <property type="molecule type" value="mRNA"/>
</dbReference>
<dbReference type="EMBL" id="BC124834">
    <property type="protein sequence ID" value="AAI24835.1"/>
    <property type="status" value="ALT_INIT"/>
    <property type="molecule type" value="mRNA"/>
</dbReference>
<dbReference type="EMBL" id="BC130177">
    <property type="protein sequence ID" value="AAI30178.1"/>
    <property type="molecule type" value="mRNA"/>
</dbReference>
<dbReference type="AGR" id="Xenbase:XB-GENE-866228"/>
<dbReference type="Xenbase" id="XB-GENE-866228">
    <property type="gene designation" value="rnf19b.L"/>
</dbReference>
<dbReference type="UniPathway" id="UPA00143"/>
<dbReference type="Proteomes" id="UP000186698">
    <property type="component" value="Unplaced"/>
</dbReference>
<dbReference type="GO" id="GO:0044194">
    <property type="term" value="C:cytolytic granule"/>
    <property type="evidence" value="ECO:0000318"/>
    <property type="project" value="GO_Central"/>
</dbReference>
<dbReference type="GO" id="GO:0005737">
    <property type="term" value="C:cytoplasm"/>
    <property type="evidence" value="ECO:0000318"/>
    <property type="project" value="GO_Central"/>
</dbReference>
<dbReference type="GO" id="GO:0005789">
    <property type="term" value="C:endoplasmic reticulum membrane"/>
    <property type="evidence" value="ECO:0007669"/>
    <property type="project" value="UniProtKB-SubCell"/>
</dbReference>
<dbReference type="GO" id="GO:0000151">
    <property type="term" value="C:ubiquitin ligase complex"/>
    <property type="evidence" value="ECO:0000318"/>
    <property type="project" value="GO_Central"/>
</dbReference>
<dbReference type="GO" id="GO:0031624">
    <property type="term" value="F:ubiquitin conjugating enzyme binding"/>
    <property type="evidence" value="ECO:0000318"/>
    <property type="project" value="GO_Central"/>
</dbReference>
<dbReference type="GO" id="GO:0061630">
    <property type="term" value="F:ubiquitin protein ligase activity"/>
    <property type="evidence" value="ECO:0000318"/>
    <property type="project" value="GO_Central"/>
</dbReference>
<dbReference type="GO" id="GO:0008270">
    <property type="term" value="F:zinc ion binding"/>
    <property type="evidence" value="ECO:0007669"/>
    <property type="project" value="UniProtKB-KW"/>
</dbReference>
<dbReference type="GO" id="GO:0016567">
    <property type="term" value="P:protein ubiquitination"/>
    <property type="evidence" value="ECO:0007669"/>
    <property type="project" value="UniProtKB-UniPathway"/>
</dbReference>
<dbReference type="GO" id="GO:0006511">
    <property type="term" value="P:ubiquitin-dependent protein catabolic process"/>
    <property type="evidence" value="ECO:0000318"/>
    <property type="project" value="GO_Central"/>
</dbReference>
<dbReference type="CDD" id="cd20355">
    <property type="entry name" value="Rcat_RBR_RNF19"/>
    <property type="match status" value="1"/>
</dbReference>
<dbReference type="CDD" id="cd16776">
    <property type="entry name" value="RING-HC_RBR_RNF19B"/>
    <property type="match status" value="1"/>
</dbReference>
<dbReference type="FunFam" id="1.20.120.1750:FF:000001">
    <property type="entry name" value="RBR-type E3 ubiquitin transferase"/>
    <property type="match status" value="1"/>
</dbReference>
<dbReference type="FunFam" id="2.20.25.20:FF:000004">
    <property type="entry name" value="RBR-type E3 ubiquitin transferase"/>
    <property type="match status" value="1"/>
</dbReference>
<dbReference type="FunFam" id="3.30.40.10:FF:000424">
    <property type="entry name" value="RBR-type E3 ubiquitin transferase"/>
    <property type="match status" value="1"/>
</dbReference>
<dbReference type="Gene3D" id="1.20.120.1750">
    <property type="match status" value="1"/>
</dbReference>
<dbReference type="Gene3D" id="2.20.25.20">
    <property type="match status" value="1"/>
</dbReference>
<dbReference type="Gene3D" id="3.30.40.10">
    <property type="entry name" value="Zinc/RING finger domain, C3HC4 (zinc finger)"/>
    <property type="match status" value="1"/>
</dbReference>
<dbReference type="InterPro" id="IPR031127">
    <property type="entry name" value="E3_UB_ligase_RBR"/>
</dbReference>
<dbReference type="InterPro" id="IPR002867">
    <property type="entry name" value="IBR_dom"/>
</dbReference>
<dbReference type="InterPro" id="IPR044066">
    <property type="entry name" value="TRIAD_supradom"/>
</dbReference>
<dbReference type="InterPro" id="IPR001841">
    <property type="entry name" value="Znf_RING"/>
</dbReference>
<dbReference type="InterPro" id="IPR013083">
    <property type="entry name" value="Znf_RING/FYVE/PHD"/>
</dbReference>
<dbReference type="PANTHER" id="PTHR11685">
    <property type="entry name" value="RBR FAMILY RING FINGER AND IBR DOMAIN-CONTAINING"/>
    <property type="match status" value="1"/>
</dbReference>
<dbReference type="Pfam" id="PF01485">
    <property type="entry name" value="IBR"/>
    <property type="match status" value="1"/>
</dbReference>
<dbReference type="Pfam" id="PF22191">
    <property type="entry name" value="IBR_1"/>
    <property type="match status" value="1"/>
</dbReference>
<dbReference type="SMART" id="SM00647">
    <property type="entry name" value="IBR"/>
    <property type="match status" value="2"/>
</dbReference>
<dbReference type="SUPFAM" id="SSF57850">
    <property type="entry name" value="RING/U-box"/>
    <property type="match status" value="3"/>
</dbReference>
<dbReference type="PROSITE" id="PS51873">
    <property type="entry name" value="TRIAD"/>
    <property type="match status" value="1"/>
</dbReference>
<dbReference type="PROSITE" id="PS50089">
    <property type="entry name" value="ZF_RING_2"/>
    <property type="match status" value="1"/>
</dbReference>
<gene>
    <name type="primary">rnf19b</name>
</gene>
<sequence length="687" mass="74541">MRLRNDCLVRLLTSWFGIFCLYEMTEGSAEPPPCPGARRRRLLLSLPNVFPGRTRAAPEPSVPSPPPSPPPPPPPPVSVPPPPSSPGGSESLIECPLCLVRQPPEEIPELLSCRHRSCLRCLRQYLRIEICESRVNLRCPECAERLSPQHVRAILRDPLLTRKYEEFLLRRCLAADPDCRWCPAPDCGYAVIAYGCASCPKLTCEREGCRTEFCYHCKHVWHPNQTCDMARQQRAPSLGVRRKHPSGISYGQESGSADDMKSCPRCSAYIIKMNDGSCNHMTCSVCGCEFCWLCMKEISDLHYLSPSGCTFWGKKPWSRKKKIIWQLSTLIGAPVGISLIAGIAIPAMVIGIPVYVGRKIHGRFENKKTSRHKKNLAVTGGVILSVIASPVVAAVSVGIGVPIMLAYVYGVVPVSLCRGGGCGVTTANGKGVKIDFEEDGPITVADAWRALKNPSIGESSMEGLTSVLSTSGSPTDGLSVLQGNYSETASFAALAGGTLTGGMLSGGRAKYCRLEVQADVQKETCQKDSVSLGAVSDSASTRAMAGSIISSYNPQEREVNNMEIQVHIEAKPSRYQLMSESSTEESLHASAPLVESEDAEACRNQVAACDITLAQPESIRSDLESSDAQSDDVPDLASEEYDSPHLFPPSPSNALQESPPHRMCAQEEGLCAHEESLSKVEIIELRV</sequence>
<comment type="function">
    <text evidence="2">E3 ubiquitin-protein ligase which accepts ubiquitin from E2 ubiquitin-conjugating enzymes UBE2L3 and UBE2L6 in the form of a thioester and then directly transfers the ubiquitin to targeted substrates, such as UCKL1. Involved in the cytolytic activity of natural killer cells and cytotoxic T-cells. Protects against staurosporin-induced cell death (By similarity).</text>
</comment>
<comment type="catalytic activity">
    <reaction evidence="1">
        <text>[E2 ubiquitin-conjugating enzyme]-S-ubiquitinyl-L-cysteine + [acceptor protein]-L-lysine = [E2 ubiquitin-conjugating enzyme]-L-cysteine + [acceptor protein]-N(6)-ubiquitinyl-L-lysine.</text>
        <dbReference type="EC" id="2.3.2.31"/>
    </reaction>
</comment>
<comment type="pathway">
    <text>Protein modification; protein ubiquitination.</text>
</comment>
<comment type="subunit">
    <text evidence="2">Interacts with UBE2L3, UBE2L6 and UCKL1.</text>
</comment>
<comment type="subcellular location">
    <subcellularLocation>
        <location evidence="2">Cytoplasmic granule membrane</location>
        <topology evidence="2">Multi-pass membrane protein</topology>
    </subcellularLocation>
    <subcellularLocation>
        <location evidence="2">Endoplasmic reticulum membrane</location>
        <topology evidence="2">Multi-pass membrane protein</topology>
    </subcellularLocation>
</comment>
<comment type="domain">
    <text evidence="2">The first IBR-type zinc finger is the most crucial for interaction with UBE2L3, UBE2L6 and UCKL1.</text>
</comment>
<comment type="domain">
    <text evidence="1">Members of the RBR family are atypical E3 ligases. They interact with the E2 conjugating enzyme UBE2L3 and function like HECT-type E3 enzymes: they bind E2s via the first RING domain, but require an obligate trans-thiolation step during the ubiquitin transfer, requiring a conserved cysteine residue in the second RING domain.</text>
</comment>
<comment type="similarity">
    <text evidence="6">Belongs to the RBR family. RNF19 subfamily.</text>
</comment>
<comment type="sequence caution" evidence="6">
    <conflict type="erroneous initiation">
        <sequence resource="EMBL-CDS" id="AAI24835"/>
    </conflict>
</comment>
<protein>
    <recommendedName>
        <fullName>E3 ubiquitin-protein ligase RNF19B</fullName>
        <ecNumber evidence="1">2.3.2.31</ecNumber>
    </recommendedName>
    <alternativeName>
        <fullName>RING finger protein 19B</fullName>
    </alternativeName>
</protein>
<organism>
    <name type="scientific">Xenopus laevis</name>
    <name type="common">African clawed frog</name>
    <dbReference type="NCBI Taxonomy" id="8355"/>
    <lineage>
        <taxon>Eukaryota</taxon>
        <taxon>Metazoa</taxon>
        <taxon>Chordata</taxon>
        <taxon>Craniata</taxon>
        <taxon>Vertebrata</taxon>
        <taxon>Euteleostomi</taxon>
        <taxon>Amphibia</taxon>
        <taxon>Batrachia</taxon>
        <taxon>Anura</taxon>
        <taxon>Pipoidea</taxon>
        <taxon>Pipidae</taxon>
        <taxon>Xenopodinae</taxon>
        <taxon>Xenopus</taxon>
        <taxon>Xenopus</taxon>
    </lineage>
</organism>
<reference key="1">
    <citation type="submission" date="2006-10" db="EMBL/GenBank/DDBJ databases">
        <authorList>
            <consortium name="NIH - Xenopus Gene Collection (XGC) project"/>
        </authorList>
    </citation>
    <scope>NUCLEOTIDE SEQUENCE [LARGE SCALE MRNA]</scope>
    <source>
        <tissue>Testis</tissue>
    </source>
</reference>